<feature type="chain" id="PRO_0000319633" description="UPF0519 protein D">
    <location>
        <begin position="1"/>
        <end position="70"/>
    </location>
</feature>
<evidence type="ECO:0000305" key="1"/>
<proteinExistence type="inferred from homology"/>
<sequence length="70" mass="7200">MTIINSISSLGKISNKNKIQTNLLNSKNYSNNSPNNIQGSNENTGIVSGVLIIVGGLAIVLGLVTSSTGL</sequence>
<name>U519D_DICDI</name>
<keyword id="KW-1185">Reference proteome</keyword>
<organism>
    <name type="scientific">Dictyostelium discoideum</name>
    <name type="common">Social amoeba</name>
    <dbReference type="NCBI Taxonomy" id="44689"/>
    <lineage>
        <taxon>Eukaryota</taxon>
        <taxon>Amoebozoa</taxon>
        <taxon>Evosea</taxon>
        <taxon>Eumycetozoa</taxon>
        <taxon>Dictyostelia</taxon>
        <taxon>Dictyosteliales</taxon>
        <taxon>Dictyosteliaceae</taxon>
        <taxon>Dictyostelium</taxon>
    </lineage>
</organism>
<comment type="similarity">
    <text evidence="1">Belongs to the UPF0519 family.</text>
</comment>
<protein>
    <recommendedName>
        <fullName>UPF0519 protein D</fullName>
    </recommendedName>
</protein>
<gene>
    <name type="ORF">DDB_G0271756</name>
</gene>
<dbReference type="EMBL" id="AAFI02000006">
    <property type="protein sequence ID" value="EAL71568.2"/>
    <property type="molecule type" value="Genomic_DNA"/>
</dbReference>
<dbReference type="RefSeq" id="XP_645470.2">
    <property type="nucleotide sequence ID" value="XM_640378.2"/>
</dbReference>
<dbReference type="PaxDb" id="44689-DDB0266538"/>
<dbReference type="EnsemblProtists" id="EAL71568">
    <property type="protein sequence ID" value="EAL71568"/>
    <property type="gene ID" value="DDB_G0271756"/>
</dbReference>
<dbReference type="GeneID" id="8618098"/>
<dbReference type="KEGG" id="ddi:DDB_G0271756"/>
<dbReference type="dictyBase" id="DDB_G0271756"/>
<dbReference type="HOGENOM" id="CLU_2799314_0_0_1"/>
<dbReference type="InParanoid" id="Q55AQ2"/>
<dbReference type="PRO" id="PR:Q55AQ2"/>
<dbReference type="Proteomes" id="UP000002195">
    <property type="component" value="Chromosome 2"/>
</dbReference>
<accession>Q55AQ2</accession>
<accession>Q75JA8</accession>
<reference key="1">
    <citation type="journal article" date="2002" name="Nature">
        <title>Sequence and analysis of chromosome 2 of Dictyostelium discoideum.</title>
        <authorList>
            <person name="Gloeckner G."/>
            <person name="Eichinger L."/>
            <person name="Szafranski K."/>
            <person name="Pachebat J.A."/>
            <person name="Bankier A.T."/>
            <person name="Dear P.H."/>
            <person name="Lehmann R."/>
            <person name="Baumgart C."/>
            <person name="Parra G."/>
            <person name="Abril J.F."/>
            <person name="Guigo R."/>
            <person name="Kumpf K."/>
            <person name="Tunggal B."/>
            <person name="Cox E.C."/>
            <person name="Quail M.A."/>
            <person name="Platzer M."/>
            <person name="Rosenthal A."/>
            <person name="Noegel A.A."/>
        </authorList>
    </citation>
    <scope>NUCLEOTIDE SEQUENCE [LARGE SCALE GENOMIC DNA]</scope>
    <source>
        <strain>AX4</strain>
    </source>
</reference>
<reference key="2">
    <citation type="journal article" date="2005" name="Nature">
        <title>The genome of the social amoeba Dictyostelium discoideum.</title>
        <authorList>
            <person name="Eichinger L."/>
            <person name="Pachebat J.A."/>
            <person name="Gloeckner G."/>
            <person name="Rajandream M.A."/>
            <person name="Sucgang R."/>
            <person name="Berriman M."/>
            <person name="Song J."/>
            <person name="Olsen R."/>
            <person name="Szafranski K."/>
            <person name="Xu Q."/>
            <person name="Tunggal B."/>
            <person name="Kummerfeld S."/>
            <person name="Madera M."/>
            <person name="Konfortov B.A."/>
            <person name="Rivero F."/>
            <person name="Bankier A.T."/>
            <person name="Lehmann R."/>
            <person name="Hamlin N."/>
            <person name="Davies R."/>
            <person name="Gaudet P."/>
            <person name="Fey P."/>
            <person name="Pilcher K."/>
            <person name="Chen G."/>
            <person name="Saunders D."/>
            <person name="Sodergren E.J."/>
            <person name="Davis P."/>
            <person name="Kerhornou A."/>
            <person name="Nie X."/>
            <person name="Hall N."/>
            <person name="Anjard C."/>
            <person name="Hemphill L."/>
            <person name="Bason N."/>
            <person name="Farbrother P."/>
            <person name="Desany B."/>
            <person name="Just E."/>
            <person name="Morio T."/>
            <person name="Rost R."/>
            <person name="Churcher C.M."/>
            <person name="Cooper J."/>
            <person name="Haydock S."/>
            <person name="van Driessche N."/>
            <person name="Cronin A."/>
            <person name="Goodhead I."/>
            <person name="Muzny D.M."/>
            <person name="Mourier T."/>
            <person name="Pain A."/>
            <person name="Lu M."/>
            <person name="Harper D."/>
            <person name="Lindsay R."/>
            <person name="Hauser H."/>
            <person name="James K.D."/>
            <person name="Quiles M."/>
            <person name="Madan Babu M."/>
            <person name="Saito T."/>
            <person name="Buchrieser C."/>
            <person name="Wardroper A."/>
            <person name="Felder M."/>
            <person name="Thangavelu M."/>
            <person name="Johnson D."/>
            <person name="Knights A."/>
            <person name="Loulseged H."/>
            <person name="Mungall K.L."/>
            <person name="Oliver K."/>
            <person name="Price C."/>
            <person name="Quail M.A."/>
            <person name="Urushihara H."/>
            <person name="Hernandez J."/>
            <person name="Rabbinowitsch E."/>
            <person name="Steffen D."/>
            <person name="Sanders M."/>
            <person name="Ma J."/>
            <person name="Kohara Y."/>
            <person name="Sharp S."/>
            <person name="Simmonds M.N."/>
            <person name="Spiegler S."/>
            <person name="Tivey A."/>
            <person name="Sugano S."/>
            <person name="White B."/>
            <person name="Walker D."/>
            <person name="Woodward J.R."/>
            <person name="Winckler T."/>
            <person name="Tanaka Y."/>
            <person name="Shaulsky G."/>
            <person name="Schleicher M."/>
            <person name="Weinstock G.M."/>
            <person name="Rosenthal A."/>
            <person name="Cox E.C."/>
            <person name="Chisholm R.L."/>
            <person name="Gibbs R.A."/>
            <person name="Loomis W.F."/>
            <person name="Platzer M."/>
            <person name="Kay R.R."/>
            <person name="Williams J.G."/>
            <person name="Dear P.H."/>
            <person name="Noegel A.A."/>
            <person name="Barrell B.G."/>
            <person name="Kuspa A."/>
        </authorList>
    </citation>
    <scope>NUCLEOTIDE SEQUENCE [LARGE SCALE GENOMIC DNA]</scope>
    <source>
        <strain>AX4</strain>
    </source>
</reference>